<comment type="function">
    <text evidence="1 2 3 8">Photoreceptor required for image-forming vision at low light intensity. While most salt water fish species use retinal as chromophore, most freshwater fish use 3-dehydroretinal, or a mixture of retinal and 3-dehydroretinal (PubMed:18422881). Light-induced isomerization of 11-cis to all-trans retinal triggers a conformational change that activates signaling via G-proteins. Subsequent receptor phosphorylation mediates displacement of the bound G-protein alpha subunit by arrestin and terminates signaling (By similarity).</text>
</comment>
<comment type="subcellular location">
    <subcellularLocation>
        <location evidence="2">Membrane</location>
        <topology evidence="2">Multi-pass membrane protein</topology>
    </subcellularLocation>
    <subcellularLocation>
        <location evidence="4">Cell projection</location>
        <location evidence="4">Cilium</location>
        <location evidence="4">Photoreceptor outer segment</location>
    </subcellularLocation>
    <text evidence="2">Synthesized in the inner segment (IS) of rod photoreceptor cells before vectorial transport to disk membranes in the rod outer segment (OS) photosensory cilia.</text>
</comment>
<comment type="PTM">
    <text evidence="1">Phosphorylated on some or all of the serine and threonine residues present in the C-terminal region.</text>
</comment>
<comment type="PTM">
    <text evidence="1">Contains one covalently linked retinal chromophore.</text>
</comment>
<comment type="similarity">
    <text evidence="6">Belongs to the G-protein coupled receptor 1 family. Opsin subfamily.</text>
</comment>
<reference key="1">
    <citation type="journal article" date="1997" name="J. Fish Biol.">
        <title>Opsin sequences of the rod visual pigments in two species of Poeciliid fish.</title>
        <authorList>
            <person name="Archer S.N."/>
            <person name="Hirano J."/>
        </authorList>
    </citation>
    <scope>NUCLEOTIDE SEQUENCE [MRNA]</scope>
    <source>
        <strain>Holbrooki</strain>
        <tissue>Retina</tissue>
    </source>
</reference>
<reference key="2">
    <citation type="journal article" date="2008" name="Photochem. Photobiol.">
        <title>Presence of rhodopsin and porphyropsin in the eyes of 164 fishes, representing marine, diadromous, coastal and freshwater species--a qualitative and comparative study.</title>
        <authorList>
            <person name="Toyama M."/>
            <person name="Hironaka M."/>
            <person name="Yamahama Y."/>
            <person name="Horiguchi H."/>
            <person name="Tsukada O."/>
            <person name="Uto N."/>
            <person name="Ueno Y."/>
            <person name="Tokunaga F."/>
            <person name="Seno K."/>
            <person name="Hariyama T."/>
        </authorList>
    </citation>
    <scope>RETINAL-BINDING</scope>
    <scope>FUNCTION</scope>
</reference>
<name>OPSD_GAMAF</name>
<dbReference type="EMBL" id="Y11146">
    <property type="protein sequence ID" value="CAA72033.1"/>
    <property type="molecule type" value="mRNA"/>
</dbReference>
<dbReference type="SMR" id="P79756"/>
<dbReference type="STRING" id="33528.ENSGAFP00000031268"/>
<dbReference type="GlyCosmos" id="P79756">
    <property type="glycosylation" value="2 sites, No reported glycans"/>
</dbReference>
<dbReference type="GO" id="GO:0016020">
    <property type="term" value="C:membrane"/>
    <property type="evidence" value="ECO:0000250"/>
    <property type="project" value="UniProtKB"/>
</dbReference>
<dbReference type="GO" id="GO:0097381">
    <property type="term" value="C:photoreceptor disc membrane"/>
    <property type="evidence" value="ECO:0000250"/>
    <property type="project" value="UniProtKB"/>
</dbReference>
<dbReference type="GO" id="GO:0005886">
    <property type="term" value="C:plasma membrane"/>
    <property type="evidence" value="ECO:0000250"/>
    <property type="project" value="UniProtKB"/>
</dbReference>
<dbReference type="GO" id="GO:0005502">
    <property type="term" value="F:11-cis retinal binding"/>
    <property type="evidence" value="ECO:0000250"/>
    <property type="project" value="UniProtKB"/>
</dbReference>
<dbReference type="GO" id="GO:0008020">
    <property type="term" value="F:G protein-coupled photoreceptor activity"/>
    <property type="evidence" value="ECO:0000250"/>
    <property type="project" value="UniProtKB"/>
</dbReference>
<dbReference type="GO" id="GO:0016038">
    <property type="term" value="P:absorption of visible light"/>
    <property type="evidence" value="ECO:0000250"/>
    <property type="project" value="UniProtKB"/>
</dbReference>
<dbReference type="GO" id="GO:0016056">
    <property type="term" value="P:G protein-coupled opsin signaling pathway"/>
    <property type="evidence" value="ECO:0000250"/>
    <property type="project" value="UniProtKB"/>
</dbReference>
<dbReference type="GO" id="GO:0007601">
    <property type="term" value="P:visual perception"/>
    <property type="evidence" value="ECO:0007669"/>
    <property type="project" value="UniProtKB-KW"/>
</dbReference>
<dbReference type="CDD" id="cd15080">
    <property type="entry name" value="7tmA_MWS_opsin"/>
    <property type="match status" value="1"/>
</dbReference>
<dbReference type="FunFam" id="1.20.1070.10:FF:000018">
    <property type="entry name" value="Rhodopsin"/>
    <property type="match status" value="1"/>
</dbReference>
<dbReference type="Gene3D" id="1.20.1070.10">
    <property type="entry name" value="Rhodopsin 7-helix transmembrane proteins"/>
    <property type="match status" value="1"/>
</dbReference>
<dbReference type="InterPro" id="IPR050125">
    <property type="entry name" value="GPCR_opsins"/>
</dbReference>
<dbReference type="InterPro" id="IPR000276">
    <property type="entry name" value="GPCR_Rhodpsn"/>
</dbReference>
<dbReference type="InterPro" id="IPR017452">
    <property type="entry name" value="GPCR_Rhodpsn_7TM"/>
</dbReference>
<dbReference type="InterPro" id="IPR001760">
    <property type="entry name" value="Opsin"/>
</dbReference>
<dbReference type="InterPro" id="IPR027430">
    <property type="entry name" value="Retinal_BS"/>
</dbReference>
<dbReference type="InterPro" id="IPR000732">
    <property type="entry name" value="Rhodopsin"/>
</dbReference>
<dbReference type="InterPro" id="IPR019477">
    <property type="entry name" value="Rhodopsin_N"/>
</dbReference>
<dbReference type="PANTHER" id="PTHR24240">
    <property type="entry name" value="OPSIN"/>
    <property type="match status" value="1"/>
</dbReference>
<dbReference type="Pfam" id="PF00001">
    <property type="entry name" value="7tm_1"/>
    <property type="match status" value="1"/>
</dbReference>
<dbReference type="Pfam" id="PF10413">
    <property type="entry name" value="Rhodopsin_N"/>
    <property type="match status" value="1"/>
</dbReference>
<dbReference type="PRINTS" id="PR00237">
    <property type="entry name" value="GPCRRHODOPSN"/>
</dbReference>
<dbReference type="PRINTS" id="PR00238">
    <property type="entry name" value="OPSIN"/>
</dbReference>
<dbReference type="PRINTS" id="PR00579">
    <property type="entry name" value="RHODOPSIN"/>
</dbReference>
<dbReference type="SUPFAM" id="SSF81321">
    <property type="entry name" value="Family A G protein-coupled receptor-like"/>
    <property type="match status" value="1"/>
</dbReference>
<dbReference type="PROSITE" id="PS00237">
    <property type="entry name" value="G_PROTEIN_RECEP_F1_1"/>
    <property type="match status" value="1"/>
</dbReference>
<dbReference type="PROSITE" id="PS50262">
    <property type="entry name" value="G_PROTEIN_RECEP_F1_2"/>
    <property type="match status" value="1"/>
</dbReference>
<dbReference type="PROSITE" id="PS00238">
    <property type="entry name" value="OPSIN"/>
    <property type="match status" value="1"/>
</dbReference>
<proteinExistence type="evidence at protein level"/>
<protein>
    <recommendedName>
        <fullName>Rhodopsin</fullName>
    </recommendedName>
</protein>
<keyword id="KW-0966">Cell projection</keyword>
<keyword id="KW-0157">Chromophore</keyword>
<keyword id="KW-1015">Disulfide bond</keyword>
<keyword id="KW-0297">G-protein coupled receptor</keyword>
<keyword id="KW-0325">Glycoprotein</keyword>
<keyword id="KW-0449">Lipoprotein</keyword>
<keyword id="KW-0472">Membrane</keyword>
<keyword id="KW-0564">Palmitate</keyword>
<keyword id="KW-0597">Phosphoprotein</keyword>
<keyword id="KW-0600">Photoreceptor protein</keyword>
<keyword id="KW-0675">Receptor</keyword>
<keyword id="KW-0681">Retinal protein</keyword>
<keyword id="KW-0716">Sensory transduction</keyword>
<keyword id="KW-0807">Transducer</keyword>
<keyword id="KW-0812">Transmembrane</keyword>
<keyword id="KW-1133">Transmembrane helix</keyword>
<keyword id="KW-0844">Vision</keyword>
<feature type="chain" id="PRO_0000197674" description="Rhodopsin">
    <location>
        <begin position="1"/>
        <end position="354"/>
    </location>
</feature>
<feature type="topological domain" description="Extracellular" evidence="9">
    <location>
        <begin position="1"/>
        <end position="36"/>
    </location>
</feature>
<feature type="transmembrane region" description="Helical; Name=1" evidence="1">
    <location>
        <begin position="37"/>
        <end position="61"/>
    </location>
</feature>
<feature type="topological domain" description="Cytoplasmic" evidence="9">
    <location>
        <begin position="62"/>
        <end position="73"/>
    </location>
</feature>
<feature type="transmembrane region" description="Helical; Name=2" evidence="1">
    <location>
        <begin position="74"/>
        <end position="96"/>
    </location>
</feature>
<feature type="topological domain" description="Extracellular" evidence="9">
    <location>
        <begin position="97"/>
        <end position="110"/>
    </location>
</feature>
<feature type="transmembrane region" description="Helical; Name=3" evidence="1">
    <location>
        <begin position="111"/>
        <end position="133"/>
    </location>
</feature>
<feature type="topological domain" description="Cytoplasmic" evidence="9">
    <location>
        <begin position="134"/>
        <end position="152"/>
    </location>
</feature>
<feature type="transmembrane region" description="Helical; Name=4" evidence="1">
    <location>
        <begin position="153"/>
        <end position="173"/>
    </location>
</feature>
<feature type="topological domain" description="Extracellular" evidence="9">
    <location>
        <begin position="174"/>
        <end position="202"/>
    </location>
</feature>
<feature type="transmembrane region" description="Helical; Name=5" evidence="1">
    <location>
        <begin position="203"/>
        <end position="224"/>
    </location>
</feature>
<feature type="topological domain" description="Cytoplasmic" evidence="9">
    <location>
        <begin position="225"/>
        <end position="252"/>
    </location>
</feature>
<feature type="transmembrane region" description="Helical; Name=6" evidence="1">
    <location>
        <begin position="253"/>
        <end position="274"/>
    </location>
</feature>
<feature type="topological domain" description="Extracellular" evidence="9">
    <location>
        <begin position="275"/>
        <end position="286"/>
    </location>
</feature>
<feature type="transmembrane region" description="Helical; Name=7" evidence="1">
    <location>
        <begin position="287"/>
        <end position="308"/>
    </location>
</feature>
<feature type="topological domain" description="Cytoplasmic" evidence="9">
    <location>
        <begin position="309"/>
        <end position="354"/>
    </location>
</feature>
<feature type="region of interest" description="Disordered" evidence="7">
    <location>
        <begin position="333"/>
        <end position="354"/>
    </location>
</feature>
<feature type="short sequence motif" description="'Ionic lock' involved in activated form stabilization" evidence="1">
    <location>
        <begin position="134"/>
        <end position="136"/>
    </location>
</feature>
<feature type="compositionally biased region" description="Low complexity" evidence="7">
    <location>
        <begin position="334"/>
        <end position="354"/>
    </location>
</feature>
<feature type="site" description="Plays an important role in the conformation switch to the active conformation" evidence="1">
    <location>
        <position position="113"/>
    </location>
</feature>
<feature type="modified residue" description="N6-(retinylidene)lysine" evidence="1">
    <location>
        <position position="296"/>
    </location>
</feature>
<feature type="lipid moiety-binding region" description="S-palmitoyl cysteine" evidence="1">
    <location>
        <position position="322"/>
    </location>
</feature>
<feature type="lipid moiety-binding region" description="S-palmitoyl cysteine" evidence="1">
    <location>
        <position position="323"/>
    </location>
</feature>
<feature type="glycosylation site" description="N-linked (GlcNAc...) asparagine" evidence="5">
    <location>
        <position position="2"/>
    </location>
</feature>
<feature type="glycosylation site" description="N-linked (GlcNAc...) asparagine" evidence="5">
    <location>
        <position position="15"/>
    </location>
</feature>
<feature type="disulfide bond" evidence="6">
    <location>
        <begin position="110"/>
        <end position="187"/>
    </location>
</feature>
<evidence type="ECO:0000250" key="1">
    <source>
        <dbReference type="UniProtKB" id="P02699"/>
    </source>
</evidence>
<evidence type="ECO:0000250" key="2">
    <source>
        <dbReference type="UniProtKB" id="P08100"/>
    </source>
</evidence>
<evidence type="ECO:0000250" key="3">
    <source>
        <dbReference type="UniProtKB" id="P32309"/>
    </source>
</evidence>
<evidence type="ECO:0000250" key="4">
    <source>
        <dbReference type="UniProtKB" id="P35359"/>
    </source>
</evidence>
<evidence type="ECO:0000255" key="5"/>
<evidence type="ECO:0000255" key="6">
    <source>
        <dbReference type="PROSITE-ProRule" id="PRU00521"/>
    </source>
</evidence>
<evidence type="ECO:0000256" key="7">
    <source>
        <dbReference type="SAM" id="MobiDB-lite"/>
    </source>
</evidence>
<evidence type="ECO:0000269" key="8">
    <source>
    </source>
</evidence>
<evidence type="ECO:0000305" key="9"/>
<organism>
    <name type="scientific">Gambusia affinis</name>
    <name type="common">Western mosquitofish</name>
    <name type="synonym">Heterandria affinis</name>
    <dbReference type="NCBI Taxonomy" id="33528"/>
    <lineage>
        <taxon>Eukaryota</taxon>
        <taxon>Metazoa</taxon>
        <taxon>Chordata</taxon>
        <taxon>Craniata</taxon>
        <taxon>Vertebrata</taxon>
        <taxon>Euteleostomi</taxon>
        <taxon>Actinopterygii</taxon>
        <taxon>Neopterygii</taxon>
        <taxon>Teleostei</taxon>
        <taxon>Neoteleostei</taxon>
        <taxon>Acanthomorphata</taxon>
        <taxon>Ovalentaria</taxon>
        <taxon>Atherinomorphae</taxon>
        <taxon>Cyprinodontiformes</taxon>
        <taxon>Poeciliidae</taxon>
        <taxon>Poeciliinae</taxon>
        <taxon>Gambusia</taxon>
    </lineage>
</organism>
<accession>P79756</accession>
<gene>
    <name type="primary">rho</name>
</gene>
<sequence length="354" mass="39644">MNGTEGPYFYVPMVNTTGIVRSPYEYPQYYLVSPAAYACLGAYMFFLILVGFPVNFLTLYVTIEHKKLRTPLNYILLNLAVADLFMVFGGFTTTIYTSMHGYFVLGRLGCNLEGYFATLGGEIGLWSLVVLAVERWLVVCKPISNFRFTENHAIMGLVFTWIMANACAAPPLLGWSRYIPEGMQCSCGVDYYTRAEGFNNESFVIYMFICHFCIPLVVVFFCYGRLLCAVKEAAAAQQESETTQRAEREVTRMVVILVIGFLVCWTPYASVAWYIFSNQGSEFGPLFMTIPAFFAKSSSIYNPMIYICMNKQFRHCMITTLCCGKNPFEEEEGASTTASKTEASSVSSSSVSPA</sequence>